<evidence type="ECO:0000255" key="1">
    <source>
        <dbReference type="PROSITE-ProRule" id="PRU00042"/>
    </source>
</evidence>
<evidence type="ECO:0000256" key="2">
    <source>
        <dbReference type="SAM" id="MobiDB-lite"/>
    </source>
</evidence>
<evidence type="ECO:0000269" key="3">
    <source>
    </source>
</evidence>
<evidence type="ECO:0000269" key="4">
    <source>
    </source>
</evidence>
<evidence type="ECO:0000303" key="5">
    <source>
    </source>
</evidence>
<evidence type="ECO:0000303" key="6">
    <source>
    </source>
</evidence>
<evidence type="ECO:0000303" key="7">
    <source>
    </source>
</evidence>
<evidence type="ECO:0000305" key="8"/>
<evidence type="ECO:0000312" key="9">
    <source>
        <dbReference type="MGI" id="MGI:1930813"/>
    </source>
</evidence>
<evidence type="ECO:0007829" key="10">
    <source>
        <dbReference type="PDB" id="2EE8"/>
    </source>
</evidence>
<gene>
    <name evidence="9" type="primary">Osr2</name>
</gene>
<keyword id="KW-0002">3D-structure</keyword>
<keyword id="KW-0025">Alternative splicing</keyword>
<keyword id="KW-0479">Metal-binding</keyword>
<keyword id="KW-0539">Nucleus</keyword>
<keyword id="KW-1185">Reference proteome</keyword>
<keyword id="KW-0677">Repeat</keyword>
<keyword id="KW-0862">Zinc</keyword>
<keyword id="KW-0863">Zinc-finger</keyword>
<protein>
    <recommendedName>
        <fullName evidence="8">Protein odd-skipped-related 2</fullName>
    </recommendedName>
</protein>
<proteinExistence type="evidence at protein level"/>
<dbReference type="EMBL" id="AF370121">
    <property type="protein sequence ID" value="AAL07364.1"/>
    <property type="molecule type" value="mRNA"/>
</dbReference>
<dbReference type="EMBL" id="AY038074">
    <property type="protein sequence ID" value="AAK74068.1"/>
    <property type="molecule type" value="mRNA"/>
</dbReference>
<dbReference type="EMBL" id="AK052147">
    <property type="protein sequence ID" value="BAC34859.1"/>
    <property type="molecule type" value="mRNA"/>
</dbReference>
<dbReference type="EMBL" id="BC013504">
    <property type="protein sequence ID" value="AAH13504.1"/>
    <property type="molecule type" value="mRNA"/>
</dbReference>
<dbReference type="CCDS" id="CCDS27422.1">
    <molecule id="Q91ZD1-2"/>
</dbReference>
<dbReference type="CCDS" id="CCDS88748.1">
    <molecule id="Q91ZD1-1"/>
</dbReference>
<dbReference type="RefSeq" id="NP_001355594.1">
    <molecule id="Q91ZD1-1"/>
    <property type="nucleotide sequence ID" value="NM_001368665.1"/>
</dbReference>
<dbReference type="RefSeq" id="NP_473390.1">
    <molecule id="Q91ZD1-2"/>
    <property type="nucleotide sequence ID" value="NM_054049.3"/>
</dbReference>
<dbReference type="RefSeq" id="XP_006520076.1">
    <property type="nucleotide sequence ID" value="XM_006520013.3"/>
</dbReference>
<dbReference type="PDB" id="2EE8">
    <property type="method" value="NMR"/>
    <property type="chains" value="A=162-252"/>
</dbReference>
<dbReference type="PDBsum" id="2EE8"/>
<dbReference type="SMR" id="Q91ZD1"/>
<dbReference type="FunCoup" id="Q91ZD1">
    <property type="interactions" value="1022"/>
</dbReference>
<dbReference type="IntAct" id="Q91ZD1">
    <property type="interactions" value="3"/>
</dbReference>
<dbReference type="STRING" id="10090.ENSMUSP00000022952"/>
<dbReference type="iPTMnet" id="Q91ZD1"/>
<dbReference type="PhosphoSitePlus" id="Q91ZD1"/>
<dbReference type="PaxDb" id="10090-ENSMUSP00000022952"/>
<dbReference type="ProteomicsDB" id="295477">
    <molecule id="Q91ZD1-1"/>
</dbReference>
<dbReference type="ProteomicsDB" id="295478">
    <molecule id="Q91ZD1-2"/>
</dbReference>
<dbReference type="Antibodypedia" id="26083">
    <property type="antibodies" value="152 antibodies from 29 providers"/>
</dbReference>
<dbReference type="DNASU" id="107587"/>
<dbReference type="Ensembl" id="ENSMUST00000022952.6">
    <molecule id="Q91ZD1-2"/>
    <property type="protein sequence ID" value="ENSMUSP00000022952.5"/>
    <property type="gene ID" value="ENSMUSG00000022330.6"/>
</dbReference>
<dbReference type="Ensembl" id="ENSMUST00000228152.2">
    <molecule id="Q91ZD1-1"/>
    <property type="protein sequence ID" value="ENSMUSP00000154286.2"/>
    <property type="gene ID" value="ENSMUSG00000022330.6"/>
</dbReference>
<dbReference type="GeneID" id="107587"/>
<dbReference type="KEGG" id="mmu:107587"/>
<dbReference type="UCSC" id="uc007vma.1">
    <molecule id="Q91ZD1-2"/>
    <property type="organism name" value="mouse"/>
</dbReference>
<dbReference type="UCSC" id="uc007vmb.1">
    <molecule id="Q91ZD1-1"/>
    <property type="organism name" value="mouse"/>
</dbReference>
<dbReference type="AGR" id="MGI:1930813"/>
<dbReference type="CTD" id="116039"/>
<dbReference type="MGI" id="MGI:1930813">
    <property type="gene designation" value="Osr2"/>
</dbReference>
<dbReference type="VEuPathDB" id="HostDB:ENSMUSG00000022330"/>
<dbReference type="eggNOG" id="KOG1721">
    <property type="taxonomic scope" value="Eukaryota"/>
</dbReference>
<dbReference type="GeneTree" id="ENSGT00940000160530"/>
<dbReference type="HOGENOM" id="CLU_051854_0_0_1"/>
<dbReference type="InParanoid" id="Q91ZD1"/>
<dbReference type="OMA" id="MWERICQ"/>
<dbReference type="OrthoDB" id="9451254at2759"/>
<dbReference type="PhylomeDB" id="Q91ZD1"/>
<dbReference type="TreeFam" id="TF350876"/>
<dbReference type="BioGRID-ORCS" id="107587">
    <property type="hits" value="1 hit in 78 CRISPR screens"/>
</dbReference>
<dbReference type="ChiTaRS" id="Osr2">
    <property type="organism name" value="mouse"/>
</dbReference>
<dbReference type="EvolutionaryTrace" id="Q91ZD1"/>
<dbReference type="PRO" id="PR:Q91ZD1"/>
<dbReference type="Proteomes" id="UP000000589">
    <property type="component" value="Chromosome 15"/>
</dbReference>
<dbReference type="RNAct" id="Q91ZD1">
    <property type="molecule type" value="protein"/>
</dbReference>
<dbReference type="Bgee" id="ENSMUSG00000022330">
    <property type="expression patterns" value="Expressed in undifferentiated genital tubercle and 160 other cell types or tissues"/>
</dbReference>
<dbReference type="GO" id="GO:0005634">
    <property type="term" value="C:nucleus"/>
    <property type="evidence" value="ECO:0000314"/>
    <property type="project" value="MGI"/>
</dbReference>
<dbReference type="GO" id="GO:0001228">
    <property type="term" value="F:DNA-binding transcription activator activity, RNA polymerase II-specific"/>
    <property type="evidence" value="ECO:0000314"/>
    <property type="project" value="NTNU_SB"/>
</dbReference>
<dbReference type="GO" id="GO:0001227">
    <property type="term" value="F:DNA-binding transcription repressor activity, RNA polymerase II-specific"/>
    <property type="evidence" value="ECO:0000314"/>
    <property type="project" value="MGI"/>
</dbReference>
<dbReference type="GO" id="GO:0000977">
    <property type="term" value="F:RNA polymerase II transcription regulatory region sequence-specific DNA binding"/>
    <property type="evidence" value="ECO:0000314"/>
    <property type="project" value="NTNU_SB"/>
</dbReference>
<dbReference type="GO" id="GO:0043565">
    <property type="term" value="F:sequence-specific DNA binding"/>
    <property type="evidence" value="ECO:0000314"/>
    <property type="project" value="UniProtKB"/>
</dbReference>
<dbReference type="GO" id="GO:0008270">
    <property type="term" value="F:zinc ion binding"/>
    <property type="evidence" value="ECO:0007669"/>
    <property type="project" value="UniProtKB-KW"/>
</dbReference>
<dbReference type="GO" id="GO:0060349">
    <property type="term" value="P:bone morphogenesis"/>
    <property type="evidence" value="ECO:0000315"/>
    <property type="project" value="UniProtKB"/>
</dbReference>
<dbReference type="GO" id="GO:0030154">
    <property type="term" value="P:cell differentiation"/>
    <property type="evidence" value="ECO:0000316"/>
    <property type="project" value="BHF-UCL"/>
</dbReference>
<dbReference type="GO" id="GO:0008283">
    <property type="term" value="P:cell population proliferation"/>
    <property type="evidence" value="ECO:0000315"/>
    <property type="project" value="MGI"/>
</dbReference>
<dbReference type="GO" id="GO:0002062">
    <property type="term" value="P:chondrocyte differentiation"/>
    <property type="evidence" value="ECO:0000316"/>
    <property type="project" value="BHF-UCL"/>
</dbReference>
<dbReference type="GO" id="GO:0009792">
    <property type="term" value="P:embryo development ending in birth or egg hatching"/>
    <property type="evidence" value="ECO:0000270"/>
    <property type="project" value="UniProtKB"/>
</dbReference>
<dbReference type="GO" id="GO:0042733">
    <property type="term" value="P:embryonic digit morphogenesis"/>
    <property type="evidence" value="ECO:0000316"/>
    <property type="project" value="BHF-UCL"/>
</dbReference>
<dbReference type="GO" id="GO:0035115">
    <property type="term" value="P:embryonic forelimb morphogenesis"/>
    <property type="evidence" value="ECO:0000316"/>
    <property type="project" value="BHF-UCL"/>
</dbReference>
<dbReference type="GO" id="GO:0035116">
    <property type="term" value="P:embryonic hindlimb morphogenesis"/>
    <property type="evidence" value="ECO:0000316"/>
    <property type="project" value="BHF-UCL"/>
</dbReference>
<dbReference type="GO" id="GO:0072498">
    <property type="term" value="P:embryonic skeletal joint development"/>
    <property type="evidence" value="ECO:0000316"/>
    <property type="project" value="BHF-UCL"/>
</dbReference>
<dbReference type="GO" id="GO:0060272">
    <property type="term" value="P:embryonic skeletal joint morphogenesis"/>
    <property type="evidence" value="ECO:0000315"/>
    <property type="project" value="BHF-UCL"/>
</dbReference>
<dbReference type="GO" id="GO:0036023">
    <property type="term" value="P:embryonic skeletal limb joint morphogenesis"/>
    <property type="evidence" value="ECO:0000316"/>
    <property type="project" value="BHF-UCL"/>
</dbReference>
<dbReference type="GO" id="GO:0048704">
    <property type="term" value="P:embryonic skeletal system morphogenesis"/>
    <property type="evidence" value="ECO:0000315"/>
    <property type="project" value="MGI"/>
</dbReference>
<dbReference type="GO" id="GO:0061029">
    <property type="term" value="P:eyelid development in camera-type eye"/>
    <property type="evidence" value="ECO:0000315"/>
    <property type="project" value="UniProtKB"/>
</dbReference>
<dbReference type="GO" id="GO:0060322">
    <property type="term" value="P:head development"/>
    <property type="evidence" value="ECO:0000315"/>
    <property type="project" value="BHF-UCL"/>
</dbReference>
<dbReference type="GO" id="GO:0001823">
    <property type="term" value="P:mesonephros development"/>
    <property type="evidence" value="ECO:0000270"/>
    <property type="project" value="UniProtKB"/>
</dbReference>
<dbReference type="GO" id="GO:0001656">
    <property type="term" value="P:metanephros development"/>
    <property type="evidence" value="ECO:0000270"/>
    <property type="project" value="UniProtKB"/>
</dbReference>
<dbReference type="GO" id="GO:0042474">
    <property type="term" value="P:middle ear morphogenesis"/>
    <property type="evidence" value="ECO:0000315"/>
    <property type="project" value="UniProtKB"/>
</dbReference>
<dbReference type="GO" id="GO:0000122">
    <property type="term" value="P:negative regulation of transcription by RNA polymerase II"/>
    <property type="evidence" value="ECO:0000314"/>
    <property type="project" value="MGI"/>
</dbReference>
<dbReference type="GO" id="GO:0042476">
    <property type="term" value="P:odontogenesis"/>
    <property type="evidence" value="ECO:0000315"/>
    <property type="project" value="UniProtKB"/>
</dbReference>
<dbReference type="GO" id="GO:0033687">
    <property type="term" value="P:osteoblast proliferation"/>
    <property type="evidence" value="ECO:0000315"/>
    <property type="project" value="UniProtKB"/>
</dbReference>
<dbReference type="GO" id="GO:0030501">
    <property type="term" value="P:positive regulation of bone mineralization"/>
    <property type="evidence" value="ECO:0000316"/>
    <property type="project" value="BHF-UCL"/>
</dbReference>
<dbReference type="GO" id="GO:0045893">
    <property type="term" value="P:positive regulation of DNA-templated transcription"/>
    <property type="evidence" value="ECO:0000315"/>
    <property type="project" value="UniProtKB"/>
</dbReference>
<dbReference type="GO" id="GO:0050679">
    <property type="term" value="P:positive regulation of epithelial cell proliferation"/>
    <property type="evidence" value="ECO:0000315"/>
    <property type="project" value="UniProtKB"/>
</dbReference>
<dbReference type="GO" id="GO:2000543">
    <property type="term" value="P:positive regulation of gastrulation"/>
    <property type="evidence" value="ECO:0000315"/>
    <property type="project" value="UniProtKB"/>
</dbReference>
<dbReference type="GO" id="GO:0010628">
    <property type="term" value="P:positive regulation of gene expression"/>
    <property type="evidence" value="ECO:0000315"/>
    <property type="project" value="UniProtKB"/>
</dbReference>
<dbReference type="GO" id="GO:2000648">
    <property type="term" value="P:positive regulation of stem cell proliferation"/>
    <property type="evidence" value="ECO:0000315"/>
    <property type="project" value="MGI"/>
</dbReference>
<dbReference type="GO" id="GO:0045944">
    <property type="term" value="P:positive regulation of transcription by RNA polymerase II"/>
    <property type="evidence" value="ECO:0000314"/>
    <property type="project" value="NTNU_SB"/>
</dbReference>
<dbReference type="GO" id="GO:0048793">
    <property type="term" value="P:pronephros development"/>
    <property type="evidence" value="ECO:0000315"/>
    <property type="project" value="UniProtKB"/>
</dbReference>
<dbReference type="GO" id="GO:0060021">
    <property type="term" value="P:roof of mouth development"/>
    <property type="evidence" value="ECO:0000315"/>
    <property type="project" value="UniProtKB"/>
</dbReference>
<dbReference type="GO" id="GO:0072089">
    <property type="term" value="P:stem cell proliferation"/>
    <property type="evidence" value="ECO:0000315"/>
    <property type="project" value="MGI"/>
</dbReference>
<dbReference type="FunFam" id="3.30.160.60:FF:000254">
    <property type="entry name" value="Odd-skipped related transciption factor 1"/>
    <property type="match status" value="1"/>
</dbReference>
<dbReference type="FunFam" id="3.30.160.60:FF:000090">
    <property type="entry name" value="Odd-skipped-related transciption factor 2"/>
    <property type="match status" value="1"/>
</dbReference>
<dbReference type="FunFam" id="3.30.160.60:FF:000318">
    <property type="entry name" value="Odd-skipped-related transciption factor 2"/>
    <property type="match status" value="1"/>
</dbReference>
<dbReference type="FunFam" id="3.30.160.60:FF:000311">
    <property type="entry name" value="protein odd-skipped-related 2 isoform X1"/>
    <property type="match status" value="1"/>
</dbReference>
<dbReference type="FunFam" id="3.30.160.60:FF:000148">
    <property type="entry name" value="zinc finger protein Gfi-1"/>
    <property type="match status" value="1"/>
</dbReference>
<dbReference type="Gene3D" id="3.30.160.60">
    <property type="entry name" value="Classic Zinc Finger"/>
    <property type="match status" value="5"/>
</dbReference>
<dbReference type="InterPro" id="IPR050717">
    <property type="entry name" value="C2H2-ZF_Transcription_Reg"/>
</dbReference>
<dbReference type="InterPro" id="IPR036236">
    <property type="entry name" value="Znf_C2H2_sf"/>
</dbReference>
<dbReference type="InterPro" id="IPR013087">
    <property type="entry name" value="Znf_C2H2_type"/>
</dbReference>
<dbReference type="PANTHER" id="PTHR14196">
    <property type="entry name" value="ODD-SKIPPED - RELATED"/>
    <property type="match status" value="1"/>
</dbReference>
<dbReference type="PANTHER" id="PTHR14196:SF4">
    <property type="entry name" value="PROTEIN ODD-SKIPPED-RELATED 2"/>
    <property type="match status" value="1"/>
</dbReference>
<dbReference type="Pfam" id="PF00096">
    <property type="entry name" value="zf-C2H2"/>
    <property type="match status" value="5"/>
</dbReference>
<dbReference type="SMART" id="SM00355">
    <property type="entry name" value="ZnF_C2H2"/>
    <property type="match status" value="5"/>
</dbReference>
<dbReference type="SUPFAM" id="SSF57667">
    <property type="entry name" value="beta-beta-alpha zinc fingers"/>
    <property type="match status" value="3"/>
</dbReference>
<dbReference type="PROSITE" id="PS00028">
    <property type="entry name" value="ZINC_FINGER_C2H2_1"/>
    <property type="match status" value="5"/>
</dbReference>
<dbReference type="PROSITE" id="PS50157">
    <property type="entry name" value="ZINC_FINGER_C2H2_2"/>
    <property type="match status" value="5"/>
</dbReference>
<reference key="1">
    <citation type="journal article" date="2001" name="Mech. Dev.">
        <title>Osr2, a new mouse gene related to Drosophila odd-skipped, exhibits dynamic expression patterns during craniofacial, limb, and kidney development.</title>
        <authorList>
            <person name="Lan Y."/>
            <person name="Kingsley P.D."/>
            <person name="Cho E.-S."/>
            <person name="Jiang R."/>
        </authorList>
    </citation>
    <scope>NUCLEOTIDE SEQUENCE [MRNA] (ISOFORM 2)</scope>
    <scope>DEVELOPMENTAL STAGE</scope>
    <source>
        <tissue>Mammary gland</tissue>
    </source>
</reference>
<reference key="2">
    <citation type="submission" date="2001-06" db="EMBL/GenBank/DDBJ databases">
        <title>Alternative splicing of the mouse Osr2 mRNA produces two protein isoforms differing in the zinc finger region.</title>
        <authorList>
            <person name="Jiang R."/>
            <person name="Cho E.-S."/>
            <person name="Lan Y."/>
        </authorList>
    </citation>
    <scope>NUCLEOTIDE SEQUENCE [MRNA] (ISOFORM 1)</scope>
</reference>
<reference key="3">
    <citation type="journal article" date="2005" name="Science">
        <title>The transcriptional landscape of the mammalian genome.</title>
        <authorList>
            <person name="Carninci P."/>
            <person name="Kasukawa T."/>
            <person name="Katayama S."/>
            <person name="Gough J."/>
            <person name="Frith M.C."/>
            <person name="Maeda N."/>
            <person name="Oyama R."/>
            <person name="Ravasi T."/>
            <person name="Lenhard B."/>
            <person name="Wells C."/>
            <person name="Kodzius R."/>
            <person name="Shimokawa K."/>
            <person name="Bajic V.B."/>
            <person name="Brenner S.E."/>
            <person name="Batalov S."/>
            <person name="Forrest A.R."/>
            <person name="Zavolan M."/>
            <person name="Davis M.J."/>
            <person name="Wilming L.G."/>
            <person name="Aidinis V."/>
            <person name="Allen J.E."/>
            <person name="Ambesi-Impiombato A."/>
            <person name="Apweiler R."/>
            <person name="Aturaliya R.N."/>
            <person name="Bailey T.L."/>
            <person name="Bansal M."/>
            <person name="Baxter L."/>
            <person name="Beisel K.W."/>
            <person name="Bersano T."/>
            <person name="Bono H."/>
            <person name="Chalk A.M."/>
            <person name="Chiu K.P."/>
            <person name="Choudhary V."/>
            <person name="Christoffels A."/>
            <person name="Clutterbuck D.R."/>
            <person name="Crowe M.L."/>
            <person name="Dalla E."/>
            <person name="Dalrymple B.P."/>
            <person name="de Bono B."/>
            <person name="Della Gatta G."/>
            <person name="di Bernardo D."/>
            <person name="Down T."/>
            <person name="Engstrom P."/>
            <person name="Fagiolini M."/>
            <person name="Faulkner G."/>
            <person name="Fletcher C.F."/>
            <person name="Fukushima T."/>
            <person name="Furuno M."/>
            <person name="Futaki S."/>
            <person name="Gariboldi M."/>
            <person name="Georgii-Hemming P."/>
            <person name="Gingeras T.R."/>
            <person name="Gojobori T."/>
            <person name="Green R.E."/>
            <person name="Gustincich S."/>
            <person name="Harbers M."/>
            <person name="Hayashi Y."/>
            <person name="Hensch T.K."/>
            <person name="Hirokawa N."/>
            <person name="Hill D."/>
            <person name="Huminiecki L."/>
            <person name="Iacono M."/>
            <person name="Ikeo K."/>
            <person name="Iwama A."/>
            <person name="Ishikawa T."/>
            <person name="Jakt M."/>
            <person name="Kanapin A."/>
            <person name="Katoh M."/>
            <person name="Kawasawa Y."/>
            <person name="Kelso J."/>
            <person name="Kitamura H."/>
            <person name="Kitano H."/>
            <person name="Kollias G."/>
            <person name="Krishnan S.P."/>
            <person name="Kruger A."/>
            <person name="Kummerfeld S.K."/>
            <person name="Kurochkin I.V."/>
            <person name="Lareau L.F."/>
            <person name="Lazarevic D."/>
            <person name="Lipovich L."/>
            <person name="Liu J."/>
            <person name="Liuni S."/>
            <person name="McWilliam S."/>
            <person name="Madan Babu M."/>
            <person name="Madera M."/>
            <person name="Marchionni L."/>
            <person name="Matsuda H."/>
            <person name="Matsuzawa S."/>
            <person name="Miki H."/>
            <person name="Mignone F."/>
            <person name="Miyake S."/>
            <person name="Morris K."/>
            <person name="Mottagui-Tabar S."/>
            <person name="Mulder N."/>
            <person name="Nakano N."/>
            <person name="Nakauchi H."/>
            <person name="Ng P."/>
            <person name="Nilsson R."/>
            <person name="Nishiguchi S."/>
            <person name="Nishikawa S."/>
            <person name="Nori F."/>
            <person name="Ohara O."/>
            <person name="Okazaki Y."/>
            <person name="Orlando V."/>
            <person name="Pang K.C."/>
            <person name="Pavan W.J."/>
            <person name="Pavesi G."/>
            <person name="Pesole G."/>
            <person name="Petrovsky N."/>
            <person name="Piazza S."/>
            <person name="Reed J."/>
            <person name="Reid J.F."/>
            <person name="Ring B.Z."/>
            <person name="Ringwald M."/>
            <person name="Rost B."/>
            <person name="Ruan Y."/>
            <person name="Salzberg S.L."/>
            <person name="Sandelin A."/>
            <person name="Schneider C."/>
            <person name="Schoenbach C."/>
            <person name="Sekiguchi K."/>
            <person name="Semple C.A."/>
            <person name="Seno S."/>
            <person name="Sessa L."/>
            <person name="Sheng Y."/>
            <person name="Shibata Y."/>
            <person name="Shimada H."/>
            <person name="Shimada K."/>
            <person name="Silva D."/>
            <person name="Sinclair B."/>
            <person name="Sperling S."/>
            <person name="Stupka E."/>
            <person name="Sugiura K."/>
            <person name="Sultana R."/>
            <person name="Takenaka Y."/>
            <person name="Taki K."/>
            <person name="Tammoja K."/>
            <person name="Tan S.L."/>
            <person name="Tang S."/>
            <person name="Taylor M.S."/>
            <person name="Tegner J."/>
            <person name="Teichmann S.A."/>
            <person name="Ueda H.R."/>
            <person name="van Nimwegen E."/>
            <person name="Verardo R."/>
            <person name="Wei C.L."/>
            <person name="Yagi K."/>
            <person name="Yamanishi H."/>
            <person name="Zabarovsky E."/>
            <person name="Zhu S."/>
            <person name="Zimmer A."/>
            <person name="Hide W."/>
            <person name="Bult C."/>
            <person name="Grimmond S.M."/>
            <person name="Teasdale R.D."/>
            <person name="Liu E.T."/>
            <person name="Brusic V."/>
            <person name="Quackenbush J."/>
            <person name="Wahlestedt C."/>
            <person name="Mattick J.S."/>
            <person name="Hume D.A."/>
            <person name="Kai C."/>
            <person name="Sasaki D."/>
            <person name="Tomaru Y."/>
            <person name="Fukuda S."/>
            <person name="Kanamori-Katayama M."/>
            <person name="Suzuki M."/>
            <person name="Aoki J."/>
            <person name="Arakawa T."/>
            <person name="Iida J."/>
            <person name="Imamura K."/>
            <person name="Itoh M."/>
            <person name="Kato T."/>
            <person name="Kawaji H."/>
            <person name="Kawagashira N."/>
            <person name="Kawashima T."/>
            <person name="Kojima M."/>
            <person name="Kondo S."/>
            <person name="Konno H."/>
            <person name="Nakano K."/>
            <person name="Ninomiya N."/>
            <person name="Nishio T."/>
            <person name="Okada M."/>
            <person name="Plessy C."/>
            <person name="Shibata K."/>
            <person name="Shiraki T."/>
            <person name="Suzuki S."/>
            <person name="Tagami M."/>
            <person name="Waki K."/>
            <person name="Watahiki A."/>
            <person name="Okamura-Oho Y."/>
            <person name="Suzuki H."/>
            <person name="Kawai J."/>
            <person name="Hayashizaki Y."/>
        </authorList>
    </citation>
    <scope>NUCLEOTIDE SEQUENCE [LARGE SCALE MRNA] (ISOFORM 2)</scope>
    <source>
        <strain>C57BL/6J</strain>
        <tissue>Eye</tissue>
    </source>
</reference>
<reference key="4">
    <citation type="journal article" date="2004" name="Genome Res.">
        <title>The status, quality, and expansion of the NIH full-length cDNA project: the Mammalian Gene Collection (MGC).</title>
        <authorList>
            <consortium name="The MGC Project Team"/>
        </authorList>
    </citation>
    <scope>NUCLEOTIDE SEQUENCE [LARGE SCALE MRNA] (ISOFORM 2)</scope>
    <source>
        <strain>FVB/N</strain>
        <tissue>Colon</tissue>
    </source>
</reference>
<reference key="5">
    <citation type="journal article" date="2016" name="Dev. Biol.">
        <title>Bmp4-Msx1 signaling and Osr2 control tooth organogenesis through antagonistic regulation of secreted Wnt antagonists.</title>
        <authorList>
            <person name="Jia S."/>
            <person name="Kwon H.E."/>
            <person name="Lan Y."/>
            <person name="Zhou J."/>
            <person name="Liu H."/>
            <person name="Jiang R."/>
        </authorList>
    </citation>
    <scope>FUNCTION</scope>
    <scope>DISRUPTION PHENOTYPE</scope>
</reference>
<reference key="6">
    <citation type="submission" date="2009-02" db="PDB data bank">
        <title>Solution structure of three ZF-C2H2 domains from mouse protein odd-skipped-related 2 splicing isoform 2.</title>
        <authorList>
            <consortium name="RIKEN structural genomics initiative (RSGI)"/>
        </authorList>
    </citation>
    <scope>STRUCTURE BY NMR OF 162-252 IN COMPLEX WITH ZINC IONS</scope>
</reference>
<comment type="function">
    <text evidence="4">May be involved in the development of the mandibular molar tooth germ at the bud stage.</text>
</comment>
<comment type="subcellular location">
    <subcellularLocation>
        <location evidence="8">Nucleus</location>
    </subcellularLocation>
</comment>
<comment type="alternative products">
    <event type="alternative splicing"/>
    <isoform>
        <id>Q91ZD1-1</id>
        <name>1</name>
        <name>OSR2A</name>
        <sequence type="displayed"/>
    </isoform>
    <isoform>
        <id>Q91ZD1-2</id>
        <name>2</name>
        <name>OSR2B</name>
        <sequence type="described" ref="VSP_017122"/>
    </isoform>
</comment>
<comment type="developmental stage">
    <text evidence="3">First detected at 9.25 dpc, specifically in the mesonephric vesicles. By 10.0 dpc expression is also observed in the rostro-lateral mandibular mesenchyme immediately adjacent to the maxillary processes. In the developing limb buds it is expressed in a unique mesenchymal domain and the onset of the expression follows a distinct dorsal to ventral developmental time sequence beginning in the forelimb and then in the hindlimb. It exhibits a dynamic expression pattern during craniofacial development, in the mandibular and maxillary processes as well as the developing palate. It is also expressed at sites of epithelial-mesenchymal interactions during tooth and kidney development.</text>
</comment>
<comment type="disruption phenotype">
    <text evidence="4">Decrease in expression of the Wnt signaling genes Dkk2, Sfrp1 and Sfrp2 and an increase in Lef1 and Tcf7 in the mandibular molar tooth mesenchyme at 13.5 dpc.</text>
</comment>
<comment type="similarity">
    <text evidence="8">Belongs to the Odd C2H2-type zinc-finger protein family.</text>
</comment>
<feature type="chain" id="PRO_0000047008" description="Protein odd-skipped-related 2">
    <location>
        <begin position="1"/>
        <end position="312"/>
    </location>
</feature>
<feature type="zinc finger region" description="C2H2-type 1" evidence="1">
    <location>
        <begin position="172"/>
        <end position="194"/>
    </location>
</feature>
<feature type="zinc finger region" description="C2H2-type 2" evidence="1">
    <location>
        <begin position="200"/>
        <end position="222"/>
    </location>
</feature>
<feature type="zinc finger region" description="C2H2-type 3" evidence="1">
    <location>
        <begin position="228"/>
        <end position="250"/>
    </location>
</feature>
<feature type="zinc finger region" description="C2H2-type 4" evidence="1">
    <location>
        <begin position="256"/>
        <end position="278"/>
    </location>
</feature>
<feature type="zinc finger region" description="C2H2-type 5" evidence="1">
    <location>
        <begin position="284"/>
        <end position="306"/>
    </location>
</feature>
<feature type="region of interest" description="Disordered" evidence="2">
    <location>
        <begin position="146"/>
        <end position="165"/>
    </location>
</feature>
<feature type="splice variant" id="VSP_017122" description="In isoform 2." evidence="5 6 7">
    <original>ESPHKCPTCGRTFNQRSNLKTHLLTHTDIKPYSCEQCGKVFRRNCDLRRHSLTHTPRQNF</original>
    <variation>TSSPTAASSAAKCSGETAICGGTA</variation>
    <location>
        <begin position="253"/>
        <end position="312"/>
    </location>
</feature>
<feature type="sequence conflict" description="In Ref. 3; BAC34859." evidence="8" ref="3">
    <original>G</original>
    <variation>W</variation>
    <location>
        <position position="142"/>
    </location>
</feature>
<feature type="strand" evidence="10">
    <location>
        <begin position="175"/>
        <end position="177"/>
    </location>
</feature>
<feature type="helix" evidence="10">
    <location>
        <begin position="184"/>
        <end position="194"/>
    </location>
</feature>
<feature type="strand" evidence="10">
    <location>
        <begin position="203"/>
        <end position="205"/>
    </location>
</feature>
<feature type="helix" evidence="10">
    <location>
        <begin position="212"/>
        <end position="218"/>
    </location>
</feature>
<feature type="helix" evidence="10">
    <location>
        <begin position="219"/>
        <end position="221"/>
    </location>
</feature>
<feature type="strand" evidence="10">
    <location>
        <begin position="231"/>
        <end position="233"/>
    </location>
</feature>
<feature type="helix" evidence="10">
    <location>
        <begin position="240"/>
        <end position="249"/>
    </location>
</feature>
<organism>
    <name type="scientific">Mus musculus</name>
    <name type="common">Mouse</name>
    <dbReference type="NCBI Taxonomy" id="10090"/>
    <lineage>
        <taxon>Eukaryota</taxon>
        <taxon>Metazoa</taxon>
        <taxon>Chordata</taxon>
        <taxon>Craniata</taxon>
        <taxon>Vertebrata</taxon>
        <taxon>Euteleostomi</taxon>
        <taxon>Mammalia</taxon>
        <taxon>Eutheria</taxon>
        <taxon>Euarchontoglires</taxon>
        <taxon>Glires</taxon>
        <taxon>Rodentia</taxon>
        <taxon>Myomorpha</taxon>
        <taxon>Muroidea</taxon>
        <taxon>Muridae</taxon>
        <taxon>Murinae</taxon>
        <taxon>Mus</taxon>
        <taxon>Mus</taxon>
    </lineage>
</organism>
<sequence>MGSKALPAPIPLHPSLQLTNYSFLQAVNTFPAAVDHLQGLYGLSAVQTMHMNHWTLGYPSVHEITRSTITEMAAAQGLVDARFPFPSLPFATHLFHPKQGAIAHVLPALHKDRPRFDFANLAVAATQEDPPKMGDLSKLSPGLGSPISGLSKLNPDRKPSRGRLPSKTKKEFICKFCGRHFTKSYNLLIHERTHTDERPYTCDICHKAFRRQDHLRDHRYIHSKEKPFKCQECGKGFCQSRTLAVHKTLHMQESPHKCPTCGRTFNQRSNLKTHLLTHTDIKPYSCEQCGKVFRRNCDLRRHSLTHTPRQNF</sequence>
<accession>Q91ZD1</accession>
<accession>Q8BPV6</accession>
<accession>Q91V54</accession>
<name>OSR2_MOUSE</name>